<reference key="1">
    <citation type="journal article" date="2009" name="Proc. Natl. Acad. Sci. U.S.A.">
        <title>Eukaryote-to-eukaryote gene transfer events revealed by the genome sequence of the wine yeast Saccharomyces cerevisiae EC1118.</title>
        <authorList>
            <person name="Novo M."/>
            <person name="Bigey F."/>
            <person name="Beyne E."/>
            <person name="Galeote V."/>
            <person name="Gavory F."/>
            <person name="Mallet S."/>
            <person name="Cambon B."/>
            <person name="Legras J.-L."/>
            <person name="Wincker P."/>
            <person name="Casaregola S."/>
            <person name="Dequin S."/>
        </authorList>
    </citation>
    <scope>NUCLEOTIDE SEQUENCE [LARGE SCALE GENOMIC DNA]</scope>
    <source>
        <strain>Lalvin EC1118 / Prise de mousse</strain>
    </source>
</reference>
<comment type="function">
    <text evidence="2">Cotranslationally removes the N-terminal methionine from nascent proteins. The N-terminal methionine is often cleaved when the second residue in the primary sequence is small and uncharged (Met-Ala-, Cys, Gly, Pro, Ser, Thr, or Val).</text>
</comment>
<comment type="catalytic activity">
    <reaction evidence="2">
        <text>Release of N-terminal amino acids, preferentially methionine, from peptides and arylamides.</text>
        <dbReference type="EC" id="3.4.11.18"/>
    </reaction>
</comment>
<comment type="cofactor">
    <cofactor evidence="2">
        <name>Co(2+)</name>
        <dbReference type="ChEBI" id="CHEBI:48828"/>
    </cofactor>
    <cofactor evidence="2">
        <name>Zn(2+)</name>
        <dbReference type="ChEBI" id="CHEBI:29105"/>
    </cofactor>
    <cofactor evidence="2">
        <name>Mn(2+)</name>
        <dbReference type="ChEBI" id="CHEBI:29035"/>
    </cofactor>
    <cofactor evidence="2">
        <name>Fe(2+)</name>
        <dbReference type="ChEBI" id="CHEBI:29033"/>
    </cofactor>
    <text evidence="2">Binds 2 divalent metal cations per subunit. Has a high-affinity and a low affinity metal-binding site. The true nature of the physiological cofactor is under debate. The enzyme is active with cobalt, zinc, manganese or divalent iron ions. Most likely, methionine aminopeptidases function as mononuclear Fe(2+)-metalloproteases under physiological conditions, and the catalytically relevant metal-binding site has been assigned to the histidine-containing high-affinity site.</text>
</comment>
<comment type="subcellular location">
    <subcellularLocation>
        <location evidence="2">Cytoplasm</location>
    </subcellularLocation>
</comment>
<comment type="similarity">
    <text evidence="2">Belongs to the peptidase M24A family. Methionine aminopeptidase eukaryotic type 2 subfamily.</text>
</comment>
<organism>
    <name type="scientific">Saccharomyces cerevisiae (strain Lalvin EC1118 / Prise de mousse)</name>
    <name type="common">Baker's yeast</name>
    <dbReference type="NCBI Taxonomy" id="643680"/>
    <lineage>
        <taxon>Eukaryota</taxon>
        <taxon>Fungi</taxon>
        <taxon>Dikarya</taxon>
        <taxon>Ascomycota</taxon>
        <taxon>Saccharomycotina</taxon>
        <taxon>Saccharomycetes</taxon>
        <taxon>Saccharomycetales</taxon>
        <taxon>Saccharomycetaceae</taxon>
        <taxon>Saccharomyces</taxon>
    </lineage>
</organism>
<keyword id="KW-0031">Aminopeptidase</keyword>
<keyword id="KW-0963">Cytoplasm</keyword>
<keyword id="KW-0378">Hydrolase</keyword>
<keyword id="KW-0479">Metal-binding</keyword>
<keyword id="KW-0597">Phosphoprotein</keyword>
<keyword id="KW-0645">Protease</keyword>
<sequence length="421" mass="47518">MTDAEIENSPASDLKELNLENEGVEQQDQAKADESDPVESKKKKNKKKKKKKSNVKKIELLFPDGKYPEGAWMDYHQDFNLQRTTDEESRYLKRDLERAEHWNDVRKGAEIHRRVRRAIKDRIVPGMKLMDIADMIENTTRKYTGAENLLAMEDPKSQGIGFPTGLSLNHCAAHFTPNAGDKTVLKYEDVMKVDYGVQVNGNIIDSAFTVSFDPQYDNLLAAVKDATYTGIKEAGIDVRLTDIGEAIQEVMESYEVEINGETYQVKPCRNLCGHSIAPYRIHGGKSVPIVKNGDTTKMEEGEHFAIETFGSTGRGYVTAGGEVSHYARSAEDHQVMPTLDSAKNLLKTIDRNFGTLPFCRRYLDRLGQEKYLFALNNLVRHGLVQDYPPLNDIPGSYTAQFEHTILLHAHKKEVVSKGDDY</sequence>
<dbReference type="EC" id="3.4.11.18" evidence="2"/>
<dbReference type="EMBL" id="FN393060">
    <property type="protein sequence ID" value="CAY77693.1"/>
    <property type="molecule type" value="Genomic_DNA"/>
</dbReference>
<dbReference type="SMR" id="C8Z3V4"/>
<dbReference type="HOGENOM" id="CLU_015857_7_1_1"/>
<dbReference type="OrthoDB" id="30534at4893"/>
<dbReference type="Proteomes" id="UP000000286">
    <property type="component" value="Chromosome II, Scaffold EC1118_1B15"/>
</dbReference>
<dbReference type="GO" id="GO:0005737">
    <property type="term" value="C:cytoplasm"/>
    <property type="evidence" value="ECO:0007669"/>
    <property type="project" value="UniProtKB-SubCell"/>
</dbReference>
<dbReference type="GO" id="GO:0004239">
    <property type="term" value="F:initiator methionyl aminopeptidase activity"/>
    <property type="evidence" value="ECO:0007669"/>
    <property type="project" value="UniProtKB-UniRule"/>
</dbReference>
<dbReference type="GO" id="GO:0046872">
    <property type="term" value="F:metal ion binding"/>
    <property type="evidence" value="ECO:0007669"/>
    <property type="project" value="UniProtKB-UniRule"/>
</dbReference>
<dbReference type="GO" id="GO:0070006">
    <property type="term" value="F:metalloaminopeptidase activity"/>
    <property type="evidence" value="ECO:0007669"/>
    <property type="project" value="UniProtKB-UniRule"/>
</dbReference>
<dbReference type="GO" id="GO:0006508">
    <property type="term" value="P:proteolysis"/>
    <property type="evidence" value="ECO:0007669"/>
    <property type="project" value="UniProtKB-KW"/>
</dbReference>
<dbReference type="CDD" id="cd01088">
    <property type="entry name" value="MetAP2"/>
    <property type="match status" value="1"/>
</dbReference>
<dbReference type="FunFam" id="1.10.10.10:FF:000370">
    <property type="entry name" value="Methionine aminopeptidase 2"/>
    <property type="match status" value="1"/>
</dbReference>
<dbReference type="Gene3D" id="3.90.230.10">
    <property type="entry name" value="Creatinase/methionine aminopeptidase superfamily"/>
    <property type="match status" value="1"/>
</dbReference>
<dbReference type="Gene3D" id="1.10.10.10">
    <property type="entry name" value="Winged helix-like DNA-binding domain superfamily/Winged helix DNA-binding domain"/>
    <property type="match status" value="1"/>
</dbReference>
<dbReference type="HAMAP" id="MF_03175">
    <property type="entry name" value="MetAP_2_euk"/>
    <property type="match status" value="1"/>
</dbReference>
<dbReference type="InterPro" id="IPR036005">
    <property type="entry name" value="Creatinase/aminopeptidase-like"/>
</dbReference>
<dbReference type="InterPro" id="IPR050247">
    <property type="entry name" value="Met_Aminopeptidase_Type2"/>
</dbReference>
<dbReference type="InterPro" id="IPR000994">
    <property type="entry name" value="Pept_M24"/>
</dbReference>
<dbReference type="InterPro" id="IPR001714">
    <property type="entry name" value="Pept_M24_MAP"/>
</dbReference>
<dbReference type="InterPro" id="IPR002468">
    <property type="entry name" value="Pept_M24A_MAP2"/>
</dbReference>
<dbReference type="InterPro" id="IPR018349">
    <property type="entry name" value="Pept_M24A_MAP2_BS"/>
</dbReference>
<dbReference type="InterPro" id="IPR036388">
    <property type="entry name" value="WH-like_DNA-bd_sf"/>
</dbReference>
<dbReference type="InterPro" id="IPR036390">
    <property type="entry name" value="WH_DNA-bd_sf"/>
</dbReference>
<dbReference type="NCBIfam" id="TIGR00501">
    <property type="entry name" value="met_pdase_II"/>
    <property type="match status" value="1"/>
</dbReference>
<dbReference type="PANTHER" id="PTHR45777">
    <property type="entry name" value="METHIONINE AMINOPEPTIDASE 2"/>
    <property type="match status" value="1"/>
</dbReference>
<dbReference type="PANTHER" id="PTHR45777:SF2">
    <property type="entry name" value="METHIONINE AMINOPEPTIDASE 2"/>
    <property type="match status" value="1"/>
</dbReference>
<dbReference type="Pfam" id="PF00557">
    <property type="entry name" value="Peptidase_M24"/>
    <property type="match status" value="1"/>
</dbReference>
<dbReference type="PRINTS" id="PR00599">
    <property type="entry name" value="MAPEPTIDASE"/>
</dbReference>
<dbReference type="SUPFAM" id="SSF55920">
    <property type="entry name" value="Creatinase/aminopeptidase"/>
    <property type="match status" value="1"/>
</dbReference>
<dbReference type="SUPFAM" id="SSF46785">
    <property type="entry name" value="Winged helix' DNA-binding domain"/>
    <property type="match status" value="1"/>
</dbReference>
<dbReference type="PROSITE" id="PS01202">
    <property type="entry name" value="MAP_2"/>
    <property type="match status" value="1"/>
</dbReference>
<gene>
    <name evidence="2" type="primary">MAP2</name>
    <name type="ORF">EC1118_1B15_0199g</name>
</gene>
<proteinExistence type="inferred from homology"/>
<accession>C8Z3V4</accession>
<protein>
    <recommendedName>
        <fullName evidence="2">Methionine aminopeptidase 2</fullName>
        <shortName evidence="2">MAP 2</shortName>
        <shortName evidence="2">MetAP 2</shortName>
        <ecNumber evidence="2">3.4.11.18</ecNumber>
    </recommendedName>
    <alternativeName>
        <fullName evidence="2">Peptidase M</fullName>
    </alternativeName>
</protein>
<feature type="chain" id="PRO_0000407676" description="Methionine aminopeptidase 2">
    <location>
        <begin position="1"/>
        <end position="421"/>
    </location>
</feature>
<feature type="region of interest" description="Disordered" evidence="3">
    <location>
        <begin position="1"/>
        <end position="53"/>
    </location>
</feature>
<feature type="compositionally biased region" description="Basic and acidic residues" evidence="3">
    <location>
        <begin position="28"/>
        <end position="40"/>
    </location>
</feature>
<feature type="compositionally biased region" description="Basic residues" evidence="3">
    <location>
        <begin position="41"/>
        <end position="53"/>
    </location>
</feature>
<feature type="binding site" evidence="2">
    <location>
        <position position="174"/>
    </location>
    <ligand>
        <name>substrate</name>
    </ligand>
</feature>
<feature type="binding site" evidence="2">
    <location>
        <position position="194"/>
    </location>
    <ligand>
        <name>a divalent metal cation</name>
        <dbReference type="ChEBI" id="CHEBI:60240"/>
        <label>1</label>
    </ligand>
</feature>
<feature type="binding site" evidence="2">
    <location>
        <position position="205"/>
    </location>
    <ligand>
        <name>a divalent metal cation</name>
        <dbReference type="ChEBI" id="CHEBI:60240"/>
        <label>1</label>
    </ligand>
</feature>
<feature type="binding site" evidence="2">
    <location>
        <position position="205"/>
    </location>
    <ligand>
        <name>a divalent metal cation</name>
        <dbReference type="ChEBI" id="CHEBI:60240"/>
        <label>2</label>
        <note>catalytic</note>
    </ligand>
</feature>
<feature type="binding site" evidence="2">
    <location>
        <position position="274"/>
    </location>
    <ligand>
        <name>a divalent metal cation</name>
        <dbReference type="ChEBI" id="CHEBI:60240"/>
        <label>2</label>
        <note>catalytic</note>
    </ligand>
</feature>
<feature type="binding site" evidence="2">
    <location>
        <position position="282"/>
    </location>
    <ligand>
        <name>substrate</name>
    </ligand>
</feature>
<feature type="binding site" evidence="2">
    <location>
        <position position="307"/>
    </location>
    <ligand>
        <name>a divalent metal cation</name>
        <dbReference type="ChEBI" id="CHEBI:60240"/>
        <label>2</label>
        <note>catalytic</note>
    </ligand>
</feature>
<feature type="binding site" evidence="2">
    <location>
        <position position="402"/>
    </location>
    <ligand>
        <name>a divalent metal cation</name>
        <dbReference type="ChEBI" id="CHEBI:60240"/>
        <label>1</label>
    </ligand>
</feature>
<feature type="binding site" evidence="2">
    <location>
        <position position="402"/>
    </location>
    <ligand>
        <name>a divalent metal cation</name>
        <dbReference type="ChEBI" id="CHEBI:60240"/>
        <label>2</label>
        <note>catalytic</note>
    </ligand>
</feature>
<feature type="modified residue" description="Phosphoserine" evidence="1">
    <location>
        <position position="35"/>
    </location>
</feature>
<evidence type="ECO:0000250" key="1">
    <source>
        <dbReference type="UniProtKB" id="P38174"/>
    </source>
</evidence>
<evidence type="ECO:0000255" key="2">
    <source>
        <dbReference type="HAMAP-Rule" id="MF_03175"/>
    </source>
</evidence>
<evidence type="ECO:0000256" key="3">
    <source>
        <dbReference type="SAM" id="MobiDB-lite"/>
    </source>
</evidence>
<name>MAP2_YEAS8</name>